<proteinExistence type="inferred from homology"/>
<keyword id="KW-1185">Reference proteome</keyword>
<keyword id="KW-0687">Ribonucleoprotein</keyword>
<keyword id="KW-0689">Ribosomal protein</keyword>
<keyword id="KW-0694">RNA-binding</keyword>
<keyword id="KW-0699">rRNA-binding</keyword>
<keyword id="KW-0820">tRNA-binding</keyword>
<name>RS13_BUCAI</name>
<organism>
    <name type="scientific">Buchnera aphidicola subsp. Acyrthosiphon pisum (strain APS)</name>
    <name type="common">Acyrthosiphon pisum symbiotic bacterium</name>
    <dbReference type="NCBI Taxonomy" id="107806"/>
    <lineage>
        <taxon>Bacteria</taxon>
        <taxon>Pseudomonadati</taxon>
        <taxon>Pseudomonadota</taxon>
        <taxon>Gammaproteobacteria</taxon>
        <taxon>Enterobacterales</taxon>
        <taxon>Erwiniaceae</taxon>
        <taxon>Buchnera</taxon>
    </lineage>
</organism>
<protein>
    <recommendedName>
        <fullName evidence="1">Small ribosomal subunit protein uS13</fullName>
    </recommendedName>
    <alternativeName>
        <fullName evidence="3">30S ribosomal protein S13</fullName>
    </alternativeName>
</protein>
<comment type="function">
    <text evidence="1">Located at the top of the head of the 30S subunit, it contacts several helices of the 16S rRNA. In the 70S ribosome it contacts the 23S rRNA (bridge B1a) and protein L5 of the 50S subunit (bridge B1b), connecting the 2 subunits; these bridges are implicated in subunit movement. Contacts the tRNAs in the A and P-sites.</text>
</comment>
<comment type="subunit">
    <text evidence="1">Part of the 30S ribosomal subunit. Forms a loose heterodimer with protein S19. Forms two bridges to the 50S subunit in the 70S ribosome.</text>
</comment>
<comment type="similarity">
    <text evidence="1">Belongs to the universal ribosomal protein uS13 family.</text>
</comment>
<feature type="chain" id="PRO_0000132072" description="Small ribosomal subunit protein uS13">
    <location>
        <begin position="1"/>
        <end position="118"/>
    </location>
</feature>
<feature type="region of interest" description="Disordered" evidence="2">
    <location>
        <begin position="94"/>
        <end position="118"/>
    </location>
</feature>
<reference key="1">
    <citation type="journal article" date="2000" name="Nature">
        <title>Genome sequence of the endocellular bacterial symbiont of aphids Buchnera sp. APS.</title>
        <authorList>
            <person name="Shigenobu S."/>
            <person name="Watanabe H."/>
            <person name="Hattori M."/>
            <person name="Sakaki Y."/>
            <person name="Ishikawa H."/>
        </authorList>
    </citation>
    <scope>NUCLEOTIDE SEQUENCE [LARGE SCALE GENOMIC DNA]</scope>
    <source>
        <strain>APS</strain>
    </source>
</reference>
<sequence>MARIAGINIPENKHTLIALTAIYGIGKKRSKFICSIANIPEHSKIVDLNEEQIDLLRTHVAKYVIEGDLRRERTLNIKRLIDLSCYRGLRHRRSLPVHGQRTKTNARTCKGPRKPIKK</sequence>
<accession>P57569</accession>
<gene>
    <name evidence="1" type="primary">rpsM</name>
    <name type="ordered locus">BU502</name>
</gene>
<dbReference type="EMBL" id="BA000003">
    <property type="protein sequence ID" value="BAB13195.1"/>
    <property type="molecule type" value="Genomic_DNA"/>
</dbReference>
<dbReference type="RefSeq" id="NP_240309.1">
    <property type="nucleotide sequence ID" value="NC_002528.1"/>
</dbReference>
<dbReference type="RefSeq" id="WP_009874453.1">
    <property type="nucleotide sequence ID" value="NZ_AP036055.1"/>
</dbReference>
<dbReference type="SMR" id="P57569"/>
<dbReference type="STRING" id="563178.BUAP5A_495"/>
<dbReference type="EnsemblBacteria" id="BAB13195">
    <property type="protein sequence ID" value="BAB13195"/>
    <property type="gene ID" value="BAB13195"/>
</dbReference>
<dbReference type="KEGG" id="buc:BU502"/>
<dbReference type="PATRIC" id="fig|107806.10.peg.507"/>
<dbReference type="eggNOG" id="COG0099">
    <property type="taxonomic scope" value="Bacteria"/>
</dbReference>
<dbReference type="HOGENOM" id="CLU_103849_1_2_6"/>
<dbReference type="Proteomes" id="UP000001806">
    <property type="component" value="Chromosome"/>
</dbReference>
<dbReference type="GO" id="GO:0005829">
    <property type="term" value="C:cytosol"/>
    <property type="evidence" value="ECO:0007669"/>
    <property type="project" value="TreeGrafter"/>
</dbReference>
<dbReference type="GO" id="GO:0015935">
    <property type="term" value="C:small ribosomal subunit"/>
    <property type="evidence" value="ECO:0007669"/>
    <property type="project" value="TreeGrafter"/>
</dbReference>
<dbReference type="GO" id="GO:0019843">
    <property type="term" value="F:rRNA binding"/>
    <property type="evidence" value="ECO:0007669"/>
    <property type="project" value="UniProtKB-UniRule"/>
</dbReference>
<dbReference type="GO" id="GO:0003735">
    <property type="term" value="F:structural constituent of ribosome"/>
    <property type="evidence" value="ECO:0007669"/>
    <property type="project" value="InterPro"/>
</dbReference>
<dbReference type="GO" id="GO:0000049">
    <property type="term" value="F:tRNA binding"/>
    <property type="evidence" value="ECO:0007669"/>
    <property type="project" value="UniProtKB-UniRule"/>
</dbReference>
<dbReference type="GO" id="GO:0006412">
    <property type="term" value="P:translation"/>
    <property type="evidence" value="ECO:0007669"/>
    <property type="project" value="UniProtKB-UniRule"/>
</dbReference>
<dbReference type="FunFam" id="1.10.8.50:FF:000001">
    <property type="entry name" value="30S ribosomal protein S13"/>
    <property type="match status" value="1"/>
</dbReference>
<dbReference type="FunFam" id="4.10.910.10:FF:000001">
    <property type="entry name" value="30S ribosomal protein S13"/>
    <property type="match status" value="1"/>
</dbReference>
<dbReference type="Gene3D" id="1.10.8.50">
    <property type="match status" value="1"/>
</dbReference>
<dbReference type="Gene3D" id="4.10.910.10">
    <property type="entry name" value="30s ribosomal protein s13, domain 2"/>
    <property type="match status" value="1"/>
</dbReference>
<dbReference type="HAMAP" id="MF_01315">
    <property type="entry name" value="Ribosomal_uS13"/>
    <property type="match status" value="1"/>
</dbReference>
<dbReference type="InterPro" id="IPR027437">
    <property type="entry name" value="Rbsml_uS13_C"/>
</dbReference>
<dbReference type="InterPro" id="IPR001892">
    <property type="entry name" value="Ribosomal_uS13"/>
</dbReference>
<dbReference type="InterPro" id="IPR010979">
    <property type="entry name" value="Ribosomal_uS13-like_H2TH"/>
</dbReference>
<dbReference type="InterPro" id="IPR019980">
    <property type="entry name" value="Ribosomal_uS13_bac-type"/>
</dbReference>
<dbReference type="InterPro" id="IPR018269">
    <property type="entry name" value="Ribosomal_uS13_CS"/>
</dbReference>
<dbReference type="NCBIfam" id="TIGR03631">
    <property type="entry name" value="uS13_bact"/>
    <property type="match status" value="1"/>
</dbReference>
<dbReference type="PANTHER" id="PTHR10871">
    <property type="entry name" value="30S RIBOSOMAL PROTEIN S13/40S RIBOSOMAL PROTEIN S18"/>
    <property type="match status" value="1"/>
</dbReference>
<dbReference type="PANTHER" id="PTHR10871:SF1">
    <property type="entry name" value="SMALL RIBOSOMAL SUBUNIT PROTEIN US13M"/>
    <property type="match status" value="1"/>
</dbReference>
<dbReference type="Pfam" id="PF00416">
    <property type="entry name" value="Ribosomal_S13"/>
    <property type="match status" value="1"/>
</dbReference>
<dbReference type="PIRSF" id="PIRSF002134">
    <property type="entry name" value="Ribosomal_S13"/>
    <property type="match status" value="1"/>
</dbReference>
<dbReference type="SUPFAM" id="SSF46946">
    <property type="entry name" value="S13-like H2TH domain"/>
    <property type="match status" value="1"/>
</dbReference>
<dbReference type="PROSITE" id="PS00646">
    <property type="entry name" value="RIBOSOMAL_S13_1"/>
    <property type="match status" value="1"/>
</dbReference>
<dbReference type="PROSITE" id="PS50159">
    <property type="entry name" value="RIBOSOMAL_S13_2"/>
    <property type="match status" value="1"/>
</dbReference>
<evidence type="ECO:0000255" key="1">
    <source>
        <dbReference type="HAMAP-Rule" id="MF_01315"/>
    </source>
</evidence>
<evidence type="ECO:0000256" key="2">
    <source>
        <dbReference type="SAM" id="MobiDB-lite"/>
    </source>
</evidence>
<evidence type="ECO:0000305" key="3"/>